<dbReference type="EC" id="3.4.23.-"/>
<dbReference type="EC" id="2.7.7.49"/>
<dbReference type="EMBL" id="X51967">
    <property type="protein sequence ID" value="CAA36225.1"/>
    <property type="molecule type" value="Genomic_DNA"/>
</dbReference>
<dbReference type="PIR" id="S09112">
    <property type="entry name" value="S09112"/>
</dbReference>
<dbReference type="SMR" id="P16423"/>
<dbReference type="FlyBase" id="FBgn0016699">
    <property type="gene designation" value="R2-element\ORF"/>
</dbReference>
<dbReference type="PRO" id="PR:P16423"/>
<dbReference type="GO" id="GO:0004190">
    <property type="term" value="F:aspartic-type endopeptidase activity"/>
    <property type="evidence" value="ECO:0007669"/>
    <property type="project" value="UniProtKB-KW"/>
</dbReference>
<dbReference type="GO" id="GO:0004519">
    <property type="term" value="F:endonuclease activity"/>
    <property type="evidence" value="ECO:0007669"/>
    <property type="project" value="UniProtKB-KW"/>
</dbReference>
<dbReference type="GO" id="GO:0003964">
    <property type="term" value="F:RNA-directed DNA polymerase activity"/>
    <property type="evidence" value="ECO:0007669"/>
    <property type="project" value="UniProtKB-KW"/>
</dbReference>
<dbReference type="GO" id="GO:0008270">
    <property type="term" value="F:zinc ion binding"/>
    <property type="evidence" value="ECO:0007669"/>
    <property type="project" value="UniProtKB-KW"/>
</dbReference>
<dbReference type="GO" id="GO:0006508">
    <property type="term" value="P:proteolysis"/>
    <property type="evidence" value="ECO:0007669"/>
    <property type="project" value="UniProtKB-KW"/>
</dbReference>
<dbReference type="CDD" id="cd01650">
    <property type="entry name" value="RT_nLTR_like"/>
    <property type="match status" value="1"/>
</dbReference>
<dbReference type="Gene3D" id="3.30.70.270">
    <property type="match status" value="1"/>
</dbReference>
<dbReference type="InterPro" id="IPR043502">
    <property type="entry name" value="DNA/RNA_pol_sf"/>
</dbReference>
<dbReference type="InterPro" id="IPR043128">
    <property type="entry name" value="Rev_trsase/Diguanyl_cyclase"/>
</dbReference>
<dbReference type="InterPro" id="IPR000477">
    <property type="entry name" value="RT_dom"/>
</dbReference>
<dbReference type="InterPro" id="IPR013087">
    <property type="entry name" value="Znf_C2H2_type"/>
</dbReference>
<dbReference type="PANTHER" id="PTHR19446">
    <property type="entry name" value="REVERSE TRANSCRIPTASES"/>
    <property type="match status" value="1"/>
</dbReference>
<dbReference type="Pfam" id="PF00078">
    <property type="entry name" value="RVT_1"/>
    <property type="match status" value="1"/>
</dbReference>
<dbReference type="SMART" id="SM00355">
    <property type="entry name" value="ZnF_C2H2"/>
    <property type="match status" value="1"/>
</dbReference>
<dbReference type="SUPFAM" id="SSF56672">
    <property type="entry name" value="DNA/RNA polymerases"/>
    <property type="match status" value="1"/>
</dbReference>
<dbReference type="PROSITE" id="PS50878">
    <property type="entry name" value="RT_POL"/>
    <property type="match status" value="1"/>
</dbReference>
<dbReference type="PROSITE" id="PS00028">
    <property type="entry name" value="ZINC_FINGER_C2H2_1"/>
    <property type="match status" value="1"/>
</dbReference>
<dbReference type="PROSITE" id="PS50157">
    <property type="entry name" value="ZINC_FINGER_C2H2_2"/>
    <property type="match status" value="1"/>
</dbReference>
<evidence type="ECO:0000255" key="1">
    <source>
        <dbReference type="PROSITE-ProRule" id="PRU00042"/>
    </source>
</evidence>
<evidence type="ECO:0000255" key="2">
    <source>
        <dbReference type="PROSITE-ProRule" id="PRU00405"/>
    </source>
</evidence>
<evidence type="ECO:0000256" key="3">
    <source>
        <dbReference type="SAM" id="MobiDB-lite"/>
    </source>
</evidence>
<protein>
    <recommendedName>
        <fullName>Retrovirus-related Pol polyprotein from type-2 retrotransposable element R2DM</fullName>
    </recommendedName>
    <alternativeName>
        <fullName>Retrovirus-related Pol polyprotein from type II retrotransposable element R2DM</fullName>
    </alternativeName>
    <domain>
        <recommendedName>
            <fullName>Protease</fullName>
            <ecNumber>3.4.23.-</ecNumber>
        </recommendedName>
    </domain>
    <domain>
        <recommendedName>
            <fullName>Reverse transcriptase</fullName>
            <ecNumber>2.7.7.49</ecNumber>
        </recommendedName>
    </domain>
    <domain>
        <recommendedName>
            <fullName>Endonuclease</fullName>
        </recommendedName>
    </domain>
</protein>
<comment type="catalytic activity">
    <reaction evidence="2">
        <text>DNA(n) + a 2'-deoxyribonucleoside 5'-triphosphate = DNA(n+1) + diphosphate</text>
        <dbReference type="Rhea" id="RHEA:22508"/>
        <dbReference type="Rhea" id="RHEA-COMP:17339"/>
        <dbReference type="Rhea" id="RHEA-COMP:17340"/>
        <dbReference type="ChEBI" id="CHEBI:33019"/>
        <dbReference type="ChEBI" id="CHEBI:61560"/>
        <dbReference type="ChEBI" id="CHEBI:173112"/>
        <dbReference type="EC" id="2.7.7.49"/>
    </reaction>
</comment>
<proteinExistence type="predicted"/>
<organism>
    <name type="scientific">Drosophila melanogaster</name>
    <name type="common">Fruit fly</name>
    <dbReference type="NCBI Taxonomy" id="7227"/>
    <lineage>
        <taxon>Eukaryota</taxon>
        <taxon>Metazoa</taxon>
        <taxon>Ecdysozoa</taxon>
        <taxon>Arthropoda</taxon>
        <taxon>Hexapoda</taxon>
        <taxon>Insecta</taxon>
        <taxon>Pterygota</taxon>
        <taxon>Neoptera</taxon>
        <taxon>Endopterygota</taxon>
        <taxon>Diptera</taxon>
        <taxon>Brachycera</taxon>
        <taxon>Muscomorpha</taxon>
        <taxon>Ephydroidea</taxon>
        <taxon>Drosophilidae</taxon>
        <taxon>Drosophila</taxon>
        <taxon>Sophophora</taxon>
    </lineage>
</organism>
<name>POLR_DROME</name>
<gene>
    <name type="primary">pol</name>
</gene>
<sequence length="1057" mass="120041">FERKNFSDGLVPQRKFIHIGTTSTNNEPRIPLHNLMTTRPSVDIFPEDQYEPNAAATLSRVPCTVCGRSFNSKRGLGVHMRSRHPDELDEERRRVDIKARWSDEEKWMMARKEVELTANGCKHINKQLAVYFANRSVEAIKKLRQRGDYKEKIEQIRGQSALAPEVANLTIRRRPSRSEQDHQVTTSETTPITPFEQSNREILRTLRGYSPVECHSKWRAQELQTIIDRAHLEGKETTLQCLSLYLLGIFPAQGVRHTLTRPPRRPRNRRESRRQQYAVVQRNWDKHKGRCIKSLLNGTDESVMPSQEIMVPYWREVMTQPSPSSCSGEVIQMDHSLERVWSAITEQDLRASRVSLSSSPGPDGITPKSAREVPSGIMLRIMNLILWCGNLPHSIRLARTVFIPKTVTAKRPQDFRPISVPSVLVRQLNAILATRLNSSINWDPRQRGFLPTDGCADNATIVDLVLRHSHKHFRSCYIANLDVSKAFDSLSHASIYDTLRAYGAPKGFVDYVQNTYEGGGTSLNGDGWSSEEFVPARGVKQGDPLSPILFNLVMDRLLRTLPSEIGAKVGNAITNAAAFADDLVLFAETRMGLQVLLDKTLDFLSIVGLKLNADKCFTVGIKGQPKQKCTVLEAQSFYVGSSEIPSLKRTDEWKYLGINFTATGRVRCNPAEDIGPKLQRLTKAPLKPQQRLFALRTVLIPQLYHKLALGSVAIGVLRKTDKLIRYYVRRWLNLPLDVPIAFVHAPPKSGGLGIPSLRWVAPMLRLRRLSNIKWPHLTQNEVASSFLEAEKQRARDRLLAEQNELLSRPAIEKYWANKLYLSVDGSGLREGGHYGPQHGWVSQPTRLLTGKEYMDGIRLRINALPTKSRTTRGRHELERQCRAGCDAPETTNHIMQKCYRSHGRRVARHNCVVNRIKRGLEERGCVVIVEPSLQCESGLNKPDLVALRQNHIDVIDTQIVTDGHSMDDAHQRKINRYDRPDIRTELRRRFEAAGDIEFHSATLNWRGIWSGQSVKRLIAKGLLSKYDSHIISVQVMRGSLGCFKQFMYLSGFSRDWT</sequence>
<feature type="chain" id="PRO_0000058511" description="Retrovirus-related Pol polyprotein from type-2 retrotransposable element R2DM">
    <location>
        <begin position="1"/>
        <end position="1057"/>
    </location>
</feature>
<feature type="domain" description="Reverse transcriptase" evidence="2">
    <location>
        <begin position="384"/>
        <end position="660"/>
    </location>
</feature>
<feature type="zinc finger region" description="C2H2-type" evidence="1">
    <location>
        <begin position="61"/>
        <end position="84"/>
    </location>
</feature>
<feature type="region of interest" description="Disordered" evidence="3">
    <location>
        <begin position="173"/>
        <end position="195"/>
    </location>
</feature>
<feature type="compositionally biased region" description="Polar residues" evidence="3">
    <location>
        <begin position="183"/>
        <end position="195"/>
    </location>
</feature>
<keyword id="KW-0064">Aspartyl protease</keyword>
<keyword id="KW-0255">Endonuclease</keyword>
<keyword id="KW-0378">Hydrolase</keyword>
<keyword id="KW-0479">Metal-binding</keyword>
<keyword id="KW-0540">Nuclease</keyword>
<keyword id="KW-0548">Nucleotidyltransferase</keyword>
<keyword id="KW-0645">Protease</keyword>
<keyword id="KW-0695">RNA-directed DNA polymerase</keyword>
<keyword id="KW-0808">Transferase</keyword>
<keyword id="KW-0814">Transposable element</keyword>
<keyword id="KW-0862">Zinc</keyword>
<keyword id="KW-0863">Zinc-finger</keyword>
<reference key="1">
    <citation type="journal article" date="1990" name="J. Mol. Biol.">
        <title>Type I (R1) and type II (R2) ribosomal DNA insertions of Drosophila melanogaster are retrotransposable elements closely related to those of Bombyx mori.</title>
        <authorList>
            <person name="Jakubczak J.L."/>
            <person name="Xiong Y."/>
            <person name="Eickbush T.H."/>
        </authorList>
    </citation>
    <scope>NUCLEOTIDE SEQUENCE [GENOMIC DNA]</scope>
    <source>
        <strain>Oregon-R</strain>
    </source>
</reference>
<accession>P16423</accession>